<protein>
    <recommendedName>
        <fullName evidence="1">Large ribosomal subunit protein uL10</fullName>
    </recommendedName>
    <alternativeName>
        <fullName evidence="2">50S ribosomal protein L10</fullName>
    </alternativeName>
</protein>
<name>RL10_SHESR</name>
<gene>
    <name evidence="1" type="primary">rplJ</name>
    <name type="ordered locus">Shewmr7_0185</name>
</gene>
<accession>Q0I0B4</accession>
<sequence>MALRLEDKKAIVAEVNEAAKGALSAVAADSRGVTVGAMTGLRKKAREAGVYVRVVRNTLARRAVEGTAFECLAETFTGPTLIAFSNEHPGAAARLLKDFAKEQANFEVKGAAFEGNFIPAADIDRLAKLPTYEEALAQLMMTMKEASAGKFVRTLAALRDQKQEAA</sequence>
<feature type="chain" id="PRO_1000005596" description="Large ribosomal subunit protein uL10">
    <location>
        <begin position="1"/>
        <end position="166"/>
    </location>
</feature>
<reference key="1">
    <citation type="submission" date="2006-08" db="EMBL/GenBank/DDBJ databases">
        <title>Complete sequence of chromosome 1 of Shewanella sp. MR-7.</title>
        <authorList>
            <person name="Copeland A."/>
            <person name="Lucas S."/>
            <person name="Lapidus A."/>
            <person name="Barry K."/>
            <person name="Detter J.C."/>
            <person name="Glavina del Rio T."/>
            <person name="Hammon N."/>
            <person name="Israni S."/>
            <person name="Dalin E."/>
            <person name="Tice H."/>
            <person name="Pitluck S."/>
            <person name="Kiss H."/>
            <person name="Brettin T."/>
            <person name="Bruce D."/>
            <person name="Han C."/>
            <person name="Tapia R."/>
            <person name="Gilna P."/>
            <person name="Schmutz J."/>
            <person name="Larimer F."/>
            <person name="Land M."/>
            <person name="Hauser L."/>
            <person name="Kyrpides N."/>
            <person name="Mikhailova N."/>
            <person name="Nealson K."/>
            <person name="Konstantinidis K."/>
            <person name="Klappenbach J."/>
            <person name="Tiedje J."/>
            <person name="Richardson P."/>
        </authorList>
    </citation>
    <scope>NUCLEOTIDE SEQUENCE [LARGE SCALE GENOMIC DNA]</scope>
    <source>
        <strain>MR-7</strain>
    </source>
</reference>
<dbReference type="EMBL" id="CP000444">
    <property type="protein sequence ID" value="ABI41191.1"/>
    <property type="molecule type" value="Genomic_DNA"/>
</dbReference>
<dbReference type="KEGG" id="shm:Shewmr7_0185"/>
<dbReference type="HOGENOM" id="CLU_092227_0_2_6"/>
<dbReference type="GO" id="GO:0015934">
    <property type="term" value="C:large ribosomal subunit"/>
    <property type="evidence" value="ECO:0007669"/>
    <property type="project" value="InterPro"/>
</dbReference>
<dbReference type="GO" id="GO:0070180">
    <property type="term" value="F:large ribosomal subunit rRNA binding"/>
    <property type="evidence" value="ECO:0007669"/>
    <property type="project" value="UniProtKB-UniRule"/>
</dbReference>
<dbReference type="GO" id="GO:0003735">
    <property type="term" value="F:structural constituent of ribosome"/>
    <property type="evidence" value="ECO:0007669"/>
    <property type="project" value="InterPro"/>
</dbReference>
<dbReference type="GO" id="GO:0006412">
    <property type="term" value="P:translation"/>
    <property type="evidence" value="ECO:0007669"/>
    <property type="project" value="UniProtKB-UniRule"/>
</dbReference>
<dbReference type="CDD" id="cd05797">
    <property type="entry name" value="Ribosomal_L10"/>
    <property type="match status" value="1"/>
</dbReference>
<dbReference type="FunFam" id="3.30.70.1730:FF:000001">
    <property type="entry name" value="50S ribosomal protein L10"/>
    <property type="match status" value="1"/>
</dbReference>
<dbReference type="Gene3D" id="3.30.70.1730">
    <property type="match status" value="1"/>
</dbReference>
<dbReference type="Gene3D" id="6.10.250.2350">
    <property type="match status" value="1"/>
</dbReference>
<dbReference type="HAMAP" id="MF_00362">
    <property type="entry name" value="Ribosomal_uL10"/>
    <property type="match status" value="1"/>
</dbReference>
<dbReference type="InterPro" id="IPR001790">
    <property type="entry name" value="Ribosomal_uL10"/>
</dbReference>
<dbReference type="InterPro" id="IPR043141">
    <property type="entry name" value="Ribosomal_uL10-like_sf"/>
</dbReference>
<dbReference type="InterPro" id="IPR022973">
    <property type="entry name" value="Ribosomal_uL10_bac"/>
</dbReference>
<dbReference type="InterPro" id="IPR047865">
    <property type="entry name" value="Ribosomal_uL10_bac_type"/>
</dbReference>
<dbReference type="InterPro" id="IPR002363">
    <property type="entry name" value="Ribosomal_uL10_CS_bac"/>
</dbReference>
<dbReference type="NCBIfam" id="NF000955">
    <property type="entry name" value="PRK00099.1-1"/>
    <property type="match status" value="1"/>
</dbReference>
<dbReference type="PANTHER" id="PTHR11560">
    <property type="entry name" value="39S RIBOSOMAL PROTEIN L10, MITOCHONDRIAL"/>
    <property type="match status" value="1"/>
</dbReference>
<dbReference type="Pfam" id="PF00466">
    <property type="entry name" value="Ribosomal_L10"/>
    <property type="match status" value="1"/>
</dbReference>
<dbReference type="SUPFAM" id="SSF160369">
    <property type="entry name" value="Ribosomal protein L10-like"/>
    <property type="match status" value="1"/>
</dbReference>
<dbReference type="PROSITE" id="PS01109">
    <property type="entry name" value="RIBOSOMAL_L10"/>
    <property type="match status" value="1"/>
</dbReference>
<proteinExistence type="inferred from homology"/>
<keyword id="KW-0687">Ribonucleoprotein</keyword>
<keyword id="KW-0689">Ribosomal protein</keyword>
<keyword id="KW-0694">RNA-binding</keyword>
<keyword id="KW-0699">rRNA-binding</keyword>
<organism>
    <name type="scientific">Shewanella sp. (strain MR-7)</name>
    <dbReference type="NCBI Taxonomy" id="60481"/>
    <lineage>
        <taxon>Bacteria</taxon>
        <taxon>Pseudomonadati</taxon>
        <taxon>Pseudomonadota</taxon>
        <taxon>Gammaproteobacteria</taxon>
        <taxon>Alteromonadales</taxon>
        <taxon>Shewanellaceae</taxon>
        <taxon>Shewanella</taxon>
    </lineage>
</organism>
<comment type="function">
    <text evidence="1">Forms part of the ribosomal stalk, playing a central role in the interaction of the ribosome with GTP-bound translation factors.</text>
</comment>
<comment type="subunit">
    <text evidence="1">Part of the ribosomal stalk of the 50S ribosomal subunit. The N-terminus interacts with L11 and the large rRNA to form the base of the stalk. The C-terminus forms an elongated spine to which L12 dimers bind in a sequential fashion forming a multimeric L10(L12)X complex.</text>
</comment>
<comment type="similarity">
    <text evidence="1">Belongs to the universal ribosomal protein uL10 family.</text>
</comment>
<evidence type="ECO:0000255" key="1">
    <source>
        <dbReference type="HAMAP-Rule" id="MF_00362"/>
    </source>
</evidence>
<evidence type="ECO:0000305" key="2"/>